<evidence type="ECO:0000255" key="1">
    <source>
        <dbReference type="HAMAP-Rule" id="MF_00360"/>
    </source>
</evidence>
<evidence type="ECO:0000256" key="2">
    <source>
        <dbReference type="SAM" id="MobiDB-lite"/>
    </source>
</evidence>
<evidence type="ECO:0000305" key="3"/>
<feature type="chain" id="PRO_1000005306" description="Small ribosomal subunit protein bS6">
    <location>
        <begin position="1"/>
        <end position="146"/>
    </location>
</feature>
<feature type="region of interest" description="Disordered" evidence="2">
    <location>
        <begin position="106"/>
        <end position="146"/>
    </location>
</feature>
<feature type="compositionally biased region" description="Basic and acidic residues" evidence="2">
    <location>
        <begin position="113"/>
        <end position="124"/>
    </location>
</feature>
<feature type="compositionally biased region" description="Low complexity" evidence="2">
    <location>
        <begin position="125"/>
        <end position="146"/>
    </location>
</feature>
<name>RS6_OENOB</name>
<reference key="1">
    <citation type="journal article" date="2006" name="Proc. Natl. Acad. Sci. U.S.A.">
        <title>Comparative genomics of the lactic acid bacteria.</title>
        <authorList>
            <person name="Makarova K.S."/>
            <person name="Slesarev A."/>
            <person name="Wolf Y.I."/>
            <person name="Sorokin A."/>
            <person name="Mirkin B."/>
            <person name="Koonin E.V."/>
            <person name="Pavlov A."/>
            <person name="Pavlova N."/>
            <person name="Karamychev V."/>
            <person name="Polouchine N."/>
            <person name="Shakhova V."/>
            <person name="Grigoriev I."/>
            <person name="Lou Y."/>
            <person name="Rohksar D."/>
            <person name="Lucas S."/>
            <person name="Huang K."/>
            <person name="Goodstein D.M."/>
            <person name="Hawkins T."/>
            <person name="Plengvidhya V."/>
            <person name="Welker D."/>
            <person name="Hughes J."/>
            <person name="Goh Y."/>
            <person name="Benson A."/>
            <person name="Baldwin K."/>
            <person name="Lee J.-H."/>
            <person name="Diaz-Muniz I."/>
            <person name="Dosti B."/>
            <person name="Smeianov V."/>
            <person name="Wechter W."/>
            <person name="Barabote R."/>
            <person name="Lorca G."/>
            <person name="Altermann E."/>
            <person name="Barrangou R."/>
            <person name="Ganesan B."/>
            <person name="Xie Y."/>
            <person name="Rawsthorne H."/>
            <person name="Tamir D."/>
            <person name="Parker C."/>
            <person name="Breidt F."/>
            <person name="Broadbent J.R."/>
            <person name="Hutkins R."/>
            <person name="O'Sullivan D."/>
            <person name="Steele J."/>
            <person name="Unlu G."/>
            <person name="Saier M.H. Jr."/>
            <person name="Klaenhammer T."/>
            <person name="Richardson P."/>
            <person name="Kozyavkin S."/>
            <person name="Weimer B.C."/>
            <person name="Mills D.A."/>
        </authorList>
    </citation>
    <scope>NUCLEOTIDE SEQUENCE [LARGE SCALE GENOMIC DNA]</scope>
    <source>
        <strain>ATCC BAA-331 / PSU-1</strain>
    </source>
</reference>
<proteinExistence type="inferred from homology"/>
<sequence>MANYELTYIVRPDLDKDAKAALVTRFDSILSDNGAKIDKSEDWDTRRFAYEINNYRQGTYHIVTFSSEDEKAVNEFDRLAKISGDILRHMIVAVDLEKLADAHAKQAAATQRAAERRAQREAERNAAQAQSSASNQARTAATTSGK</sequence>
<comment type="function">
    <text evidence="1">Binds together with bS18 to 16S ribosomal RNA.</text>
</comment>
<comment type="similarity">
    <text evidence="1">Belongs to the bacterial ribosomal protein bS6 family.</text>
</comment>
<accession>Q04HQ7</accession>
<gene>
    <name evidence="1" type="primary">rpsF</name>
    <name type="ordered locus">OEOE_0010</name>
</gene>
<protein>
    <recommendedName>
        <fullName evidence="1">Small ribosomal subunit protein bS6</fullName>
    </recommendedName>
    <alternativeName>
        <fullName evidence="3">30S ribosomal protein S6</fullName>
    </alternativeName>
</protein>
<organism>
    <name type="scientific">Oenococcus oeni (strain ATCC BAA-331 / PSU-1)</name>
    <dbReference type="NCBI Taxonomy" id="203123"/>
    <lineage>
        <taxon>Bacteria</taxon>
        <taxon>Bacillati</taxon>
        <taxon>Bacillota</taxon>
        <taxon>Bacilli</taxon>
        <taxon>Lactobacillales</taxon>
        <taxon>Lactobacillaceae</taxon>
        <taxon>Oenococcus</taxon>
    </lineage>
</organism>
<keyword id="KW-1185">Reference proteome</keyword>
<keyword id="KW-0687">Ribonucleoprotein</keyword>
<keyword id="KW-0689">Ribosomal protein</keyword>
<keyword id="KW-0694">RNA-binding</keyword>
<keyword id="KW-0699">rRNA-binding</keyword>
<dbReference type="EMBL" id="CP000411">
    <property type="protein sequence ID" value="ABJ56015.1"/>
    <property type="molecule type" value="Genomic_DNA"/>
</dbReference>
<dbReference type="RefSeq" id="WP_002817809.1">
    <property type="nucleotide sequence ID" value="NC_008528.1"/>
</dbReference>
<dbReference type="SMR" id="Q04HQ7"/>
<dbReference type="STRING" id="203123.OEOE_0010"/>
<dbReference type="GeneID" id="75064862"/>
<dbReference type="KEGG" id="ooe:OEOE_0010"/>
<dbReference type="eggNOG" id="COG0360">
    <property type="taxonomic scope" value="Bacteria"/>
</dbReference>
<dbReference type="HOGENOM" id="CLU_113441_4_0_9"/>
<dbReference type="Proteomes" id="UP000000774">
    <property type="component" value="Chromosome"/>
</dbReference>
<dbReference type="GO" id="GO:0005737">
    <property type="term" value="C:cytoplasm"/>
    <property type="evidence" value="ECO:0007669"/>
    <property type="project" value="UniProtKB-ARBA"/>
</dbReference>
<dbReference type="GO" id="GO:1990904">
    <property type="term" value="C:ribonucleoprotein complex"/>
    <property type="evidence" value="ECO:0007669"/>
    <property type="project" value="UniProtKB-KW"/>
</dbReference>
<dbReference type="GO" id="GO:0005840">
    <property type="term" value="C:ribosome"/>
    <property type="evidence" value="ECO:0007669"/>
    <property type="project" value="UniProtKB-KW"/>
</dbReference>
<dbReference type="GO" id="GO:0070181">
    <property type="term" value="F:small ribosomal subunit rRNA binding"/>
    <property type="evidence" value="ECO:0007669"/>
    <property type="project" value="TreeGrafter"/>
</dbReference>
<dbReference type="GO" id="GO:0003735">
    <property type="term" value="F:structural constituent of ribosome"/>
    <property type="evidence" value="ECO:0007669"/>
    <property type="project" value="InterPro"/>
</dbReference>
<dbReference type="GO" id="GO:0006412">
    <property type="term" value="P:translation"/>
    <property type="evidence" value="ECO:0007669"/>
    <property type="project" value="UniProtKB-UniRule"/>
</dbReference>
<dbReference type="CDD" id="cd00473">
    <property type="entry name" value="bS6"/>
    <property type="match status" value="1"/>
</dbReference>
<dbReference type="Gene3D" id="3.30.70.60">
    <property type="match status" value="1"/>
</dbReference>
<dbReference type="HAMAP" id="MF_00360">
    <property type="entry name" value="Ribosomal_bS6"/>
    <property type="match status" value="1"/>
</dbReference>
<dbReference type="InterPro" id="IPR000529">
    <property type="entry name" value="Ribosomal_bS6"/>
</dbReference>
<dbReference type="InterPro" id="IPR035980">
    <property type="entry name" value="Ribosomal_bS6_sf"/>
</dbReference>
<dbReference type="InterPro" id="IPR020814">
    <property type="entry name" value="Ribosomal_S6_plastid/chlpt"/>
</dbReference>
<dbReference type="InterPro" id="IPR014717">
    <property type="entry name" value="Transl_elong_EF1B/ribsomal_bS6"/>
</dbReference>
<dbReference type="NCBIfam" id="TIGR00166">
    <property type="entry name" value="S6"/>
    <property type="match status" value="1"/>
</dbReference>
<dbReference type="PANTHER" id="PTHR21011">
    <property type="entry name" value="MITOCHONDRIAL 28S RIBOSOMAL PROTEIN S6"/>
    <property type="match status" value="1"/>
</dbReference>
<dbReference type="PANTHER" id="PTHR21011:SF1">
    <property type="entry name" value="SMALL RIBOSOMAL SUBUNIT PROTEIN BS6M"/>
    <property type="match status" value="1"/>
</dbReference>
<dbReference type="Pfam" id="PF01250">
    <property type="entry name" value="Ribosomal_S6"/>
    <property type="match status" value="1"/>
</dbReference>
<dbReference type="SUPFAM" id="SSF54995">
    <property type="entry name" value="Ribosomal protein S6"/>
    <property type="match status" value="1"/>
</dbReference>